<accession>A5IL77</accession>
<organism>
    <name type="scientific">Thermotoga petrophila (strain ATCC BAA-488 / DSM 13995 / JCM 10881 / RKU-1)</name>
    <dbReference type="NCBI Taxonomy" id="390874"/>
    <lineage>
        <taxon>Bacteria</taxon>
        <taxon>Thermotogati</taxon>
        <taxon>Thermotogota</taxon>
        <taxon>Thermotogae</taxon>
        <taxon>Thermotogales</taxon>
        <taxon>Thermotogaceae</taxon>
        <taxon>Thermotoga</taxon>
    </lineage>
</organism>
<feature type="chain" id="PRO_1000047005" description="Endonuclease V">
    <location>
        <begin position="1"/>
        <end position="225"/>
    </location>
</feature>
<feature type="binding site" evidence="1">
    <location>
        <position position="43"/>
    </location>
    <ligand>
        <name>Mg(2+)</name>
        <dbReference type="ChEBI" id="CHEBI:18420"/>
    </ligand>
</feature>
<feature type="binding site" evidence="1">
    <location>
        <position position="110"/>
    </location>
    <ligand>
        <name>Mg(2+)</name>
        <dbReference type="ChEBI" id="CHEBI:18420"/>
    </ligand>
</feature>
<feature type="site" description="Interaction with target DNA" evidence="1">
    <location>
        <position position="80"/>
    </location>
</feature>
<gene>
    <name evidence="1" type="primary">nfi</name>
    <name type="ordered locus">Tpet_0932</name>
</gene>
<keyword id="KW-0963">Cytoplasm</keyword>
<keyword id="KW-0227">DNA damage</keyword>
<keyword id="KW-0234">DNA repair</keyword>
<keyword id="KW-0255">Endonuclease</keyword>
<keyword id="KW-0378">Hydrolase</keyword>
<keyword id="KW-0460">Magnesium</keyword>
<keyword id="KW-0479">Metal-binding</keyword>
<keyword id="KW-0540">Nuclease</keyword>
<comment type="function">
    <text evidence="1">DNA repair enzyme involved in the repair of deaminated bases. Selectively cleaves double-stranded DNA at the second phosphodiester bond 3' to a deoxyinosine leaving behind the intact lesion on the nicked DNA.</text>
</comment>
<comment type="catalytic activity">
    <reaction evidence="1">
        <text>Endonucleolytic cleavage at apurinic or apyrimidinic sites to products with a 5'-phosphate.</text>
        <dbReference type="EC" id="3.1.21.7"/>
    </reaction>
</comment>
<comment type="cofactor">
    <cofactor evidence="1">
        <name>Mg(2+)</name>
        <dbReference type="ChEBI" id="CHEBI:18420"/>
    </cofactor>
</comment>
<comment type="subcellular location">
    <subcellularLocation>
        <location evidence="1">Cytoplasm</location>
    </subcellularLocation>
</comment>
<comment type="similarity">
    <text evidence="1">Belongs to the endonuclease V family.</text>
</comment>
<proteinExistence type="inferred from homology"/>
<sequence length="225" mass="25612">MDYRQLHRWDLPPEEAIKVQNELRKKIKLTPYEGEPEYVAGVDLSFPGKEEGLAVIVVLEYPSFKILEVVSERGEITFPYIPGLLAFREGPLFLKAWEKLRTKPDVVVFDGQGLAHPRKLGIASHMGLFIEIPTIGVAKSRLYGTFKMPEDKRCSWSYLYDGEEIIGCVIRTKEGSAPIFVSPGHLMDIESSKRLIKAFTLPGRRIPEPTRLAHIYTQRLKKGLF</sequence>
<dbReference type="EC" id="3.1.21.7" evidence="1"/>
<dbReference type="EMBL" id="CP000702">
    <property type="protein sequence ID" value="ABQ46950.1"/>
    <property type="molecule type" value="Genomic_DNA"/>
</dbReference>
<dbReference type="RefSeq" id="WP_011943494.1">
    <property type="nucleotide sequence ID" value="NC_009486.1"/>
</dbReference>
<dbReference type="SMR" id="A5IL77"/>
<dbReference type="STRING" id="390874.Tpet_0932"/>
<dbReference type="KEGG" id="tpt:Tpet_0932"/>
<dbReference type="eggNOG" id="COG1515">
    <property type="taxonomic scope" value="Bacteria"/>
</dbReference>
<dbReference type="HOGENOM" id="CLU_047631_1_1_0"/>
<dbReference type="Proteomes" id="UP000006558">
    <property type="component" value="Chromosome"/>
</dbReference>
<dbReference type="GO" id="GO:0005737">
    <property type="term" value="C:cytoplasm"/>
    <property type="evidence" value="ECO:0007669"/>
    <property type="project" value="UniProtKB-SubCell"/>
</dbReference>
<dbReference type="GO" id="GO:0043737">
    <property type="term" value="F:deoxyribonuclease V activity"/>
    <property type="evidence" value="ECO:0007669"/>
    <property type="project" value="UniProtKB-UniRule"/>
</dbReference>
<dbReference type="GO" id="GO:0000287">
    <property type="term" value="F:magnesium ion binding"/>
    <property type="evidence" value="ECO:0007669"/>
    <property type="project" value="UniProtKB-UniRule"/>
</dbReference>
<dbReference type="GO" id="GO:0016891">
    <property type="term" value="F:RNA endonuclease activity, producing 5'-phosphomonoesters"/>
    <property type="evidence" value="ECO:0007669"/>
    <property type="project" value="TreeGrafter"/>
</dbReference>
<dbReference type="GO" id="GO:0003727">
    <property type="term" value="F:single-stranded RNA binding"/>
    <property type="evidence" value="ECO:0007669"/>
    <property type="project" value="TreeGrafter"/>
</dbReference>
<dbReference type="GO" id="GO:0006281">
    <property type="term" value="P:DNA repair"/>
    <property type="evidence" value="ECO:0007669"/>
    <property type="project" value="UniProtKB-UniRule"/>
</dbReference>
<dbReference type="CDD" id="cd06559">
    <property type="entry name" value="Endonuclease_V"/>
    <property type="match status" value="1"/>
</dbReference>
<dbReference type="FunFam" id="3.30.2170.10:FF:000008">
    <property type="entry name" value="Endonuclease V"/>
    <property type="match status" value="1"/>
</dbReference>
<dbReference type="Gene3D" id="3.30.2170.10">
    <property type="entry name" value="archaeoglobus fulgidus dsm 4304 superfamily"/>
    <property type="match status" value="1"/>
</dbReference>
<dbReference type="HAMAP" id="MF_00801">
    <property type="entry name" value="Endonuclease_5"/>
    <property type="match status" value="1"/>
</dbReference>
<dbReference type="InterPro" id="IPR007581">
    <property type="entry name" value="Endonuclease-V"/>
</dbReference>
<dbReference type="InterPro" id="IPR053396">
    <property type="entry name" value="Endonuclease_V-like"/>
</dbReference>
<dbReference type="NCBIfam" id="NF041102">
    <property type="entry name" value="endonuc_V_Ttgales"/>
    <property type="match status" value="1"/>
</dbReference>
<dbReference type="PANTHER" id="PTHR28511">
    <property type="entry name" value="ENDONUCLEASE V"/>
    <property type="match status" value="1"/>
</dbReference>
<dbReference type="PANTHER" id="PTHR28511:SF1">
    <property type="entry name" value="ENDONUCLEASE V"/>
    <property type="match status" value="1"/>
</dbReference>
<dbReference type="Pfam" id="PF04493">
    <property type="entry name" value="Endonuclease_5"/>
    <property type="match status" value="1"/>
</dbReference>
<name>NFI_THEP1</name>
<evidence type="ECO:0000255" key="1">
    <source>
        <dbReference type="HAMAP-Rule" id="MF_00801"/>
    </source>
</evidence>
<protein>
    <recommendedName>
        <fullName evidence="1">Endonuclease V</fullName>
        <ecNumber evidence="1">3.1.21.7</ecNumber>
    </recommendedName>
    <alternativeName>
        <fullName evidence="1">Deoxyinosine 3'endonuclease</fullName>
    </alternativeName>
    <alternativeName>
        <fullName evidence="1">Deoxyribonuclease V</fullName>
        <shortName evidence="1">DNase V</shortName>
    </alternativeName>
</protein>
<reference key="1">
    <citation type="submission" date="2007-05" db="EMBL/GenBank/DDBJ databases">
        <title>Complete sequence of Thermotoga petrophila RKU-1.</title>
        <authorList>
            <consortium name="US DOE Joint Genome Institute"/>
            <person name="Copeland A."/>
            <person name="Lucas S."/>
            <person name="Lapidus A."/>
            <person name="Barry K."/>
            <person name="Glavina del Rio T."/>
            <person name="Dalin E."/>
            <person name="Tice H."/>
            <person name="Pitluck S."/>
            <person name="Sims D."/>
            <person name="Brettin T."/>
            <person name="Bruce D."/>
            <person name="Detter J.C."/>
            <person name="Han C."/>
            <person name="Tapia R."/>
            <person name="Schmutz J."/>
            <person name="Larimer F."/>
            <person name="Land M."/>
            <person name="Hauser L."/>
            <person name="Kyrpides N."/>
            <person name="Mikhailova N."/>
            <person name="Nelson K."/>
            <person name="Gogarten J.P."/>
            <person name="Noll K."/>
            <person name="Richardson P."/>
        </authorList>
    </citation>
    <scope>NUCLEOTIDE SEQUENCE [LARGE SCALE GENOMIC DNA]</scope>
    <source>
        <strain>ATCC BAA-488 / DSM 13995 / JCM 10881 / RKU-1</strain>
    </source>
</reference>